<gene>
    <name evidence="1" type="primary">pckG</name>
    <name type="ordered locus">CAB884</name>
</gene>
<proteinExistence type="inferred from homology"/>
<accession>Q5L4X1</accession>
<comment type="function">
    <text evidence="1">Catalyzes the conversion of oxaloacetate (OAA) to phosphoenolpyruvate (PEP), the rate-limiting step in the metabolic pathway that produces glucose from lactate and other precursors derived from the citric acid cycle.</text>
</comment>
<comment type="catalytic activity">
    <reaction evidence="1">
        <text>oxaloacetate + GTP = phosphoenolpyruvate + GDP + CO2</text>
        <dbReference type="Rhea" id="RHEA:10388"/>
        <dbReference type="ChEBI" id="CHEBI:16452"/>
        <dbReference type="ChEBI" id="CHEBI:16526"/>
        <dbReference type="ChEBI" id="CHEBI:37565"/>
        <dbReference type="ChEBI" id="CHEBI:58189"/>
        <dbReference type="ChEBI" id="CHEBI:58702"/>
        <dbReference type="EC" id="4.1.1.32"/>
    </reaction>
</comment>
<comment type="cofactor">
    <cofactor evidence="1">
        <name>Mn(2+)</name>
        <dbReference type="ChEBI" id="CHEBI:29035"/>
    </cofactor>
    <text evidence="1">Binds 1 Mn(2+) ion per subunit.</text>
</comment>
<comment type="pathway">
    <text evidence="1">Carbohydrate biosynthesis; gluconeogenesis.</text>
</comment>
<comment type="subunit">
    <text evidence="1">Monomer.</text>
</comment>
<comment type="subcellular location">
    <subcellularLocation>
        <location evidence="1">Cytoplasm</location>
    </subcellularLocation>
</comment>
<comment type="similarity">
    <text evidence="1">Belongs to the phosphoenolpyruvate carboxykinase [GTP] family.</text>
</comment>
<organism>
    <name type="scientific">Chlamydia abortus (strain DSM 27085 / S26/3)</name>
    <name type="common">Chlamydophila abortus</name>
    <dbReference type="NCBI Taxonomy" id="218497"/>
    <lineage>
        <taxon>Bacteria</taxon>
        <taxon>Pseudomonadati</taxon>
        <taxon>Chlamydiota</taxon>
        <taxon>Chlamydiia</taxon>
        <taxon>Chlamydiales</taxon>
        <taxon>Chlamydiaceae</taxon>
        <taxon>Chlamydia/Chlamydophila group</taxon>
        <taxon>Chlamydia</taxon>
    </lineage>
</organism>
<name>PCKG_CHLAB</name>
<sequence length="603" mass="66780">MTSVWSEAIQHKDLKQWIQEVAELVTPKDIRICNGSDSEYVEIYGLMQQSGVAIPLNRDVHPNCFLVRSSPEDVARVEQFTFICTKEQKDAGPTNNWRDPEEMRQELHGLFRGCMRGRTLYVVPFCMGPLNSPFSLIGVEITDSPYVVCSMKIMTRMGEEVLKALGTSGSFHKCLHSVGVPLAPGEKDLAWPCNPQHMRIVHFQDDSSVMSFGSGYGGNALLGKKCVALRLASYIARSQGWLAEHMLIIGVTNPEGQKKYFAASFPSACGKTNLAMLKPKIPGWKVECVGDDIAWIRPGPDGRLYAVNPEFGFFGVAPGTSATTNPNALATCTSNSIFTNVALTPDGDVWWEGLTSQPPEGLIDWQGKPWKPGGAPAAHPNSRFTTPVQQCPVLDPQWNSPEGVPIEAMIFGGRRSETIPLVYEALSWQHGVTIGASMSSATTAASVGEQGKLRHDPFAMLPFCGYNMAHYFDHWLSFASNTSLKLPKIYGVNWFRKDKNGNFIWPGFSDNLRVLEWIFRRTNGEESIAKKTPIGYLPEESALNLEGLNLSTQALQDLLSVDVPGWLKEVANVREYCKIFGSDLPQAITDELFRIENELKIIK</sequence>
<dbReference type="EC" id="4.1.1.32" evidence="1"/>
<dbReference type="EMBL" id="CR848038">
    <property type="protein sequence ID" value="CAH64324.1"/>
    <property type="molecule type" value="Genomic_DNA"/>
</dbReference>
<dbReference type="RefSeq" id="WP_011097399.1">
    <property type="nucleotide sequence ID" value="NC_004552.2"/>
</dbReference>
<dbReference type="SMR" id="Q5L4X1"/>
<dbReference type="KEGG" id="cab:CAB884"/>
<dbReference type="eggNOG" id="COG1274">
    <property type="taxonomic scope" value="Bacteria"/>
</dbReference>
<dbReference type="HOGENOM" id="CLU_028872_1_1_0"/>
<dbReference type="OrthoDB" id="9758871at2"/>
<dbReference type="UniPathway" id="UPA00138"/>
<dbReference type="Proteomes" id="UP000001012">
    <property type="component" value="Chromosome"/>
</dbReference>
<dbReference type="GO" id="GO:0005829">
    <property type="term" value="C:cytosol"/>
    <property type="evidence" value="ECO:0007669"/>
    <property type="project" value="TreeGrafter"/>
</dbReference>
<dbReference type="GO" id="GO:0005525">
    <property type="term" value="F:GTP binding"/>
    <property type="evidence" value="ECO:0007669"/>
    <property type="project" value="UniProtKB-UniRule"/>
</dbReference>
<dbReference type="GO" id="GO:0030145">
    <property type="term" value="F:manganese ion binding"/>
    <property type="evidence" value="ECO:0007669"/>
    <property type="project" value="UniProtKB-UniRule"/>
</dbReference>
<dbReference type="GO" id="GO:0004613">
    <property type="term" value="F:phosphoenolpyruvate carboxykinase (GTP) activity"/>
    <property type="evidence" value="ECO:0007669"/>
    <property type="project" value="UniProtKB-UniRule"/>
</dbReference>
<dbReference type="GO" id="GO:0071333">
    <property type="term" value="P:cellular response to glucose stimulus"/>
    <property type="evidence" value="ECO:0007669"/>
    <property type="project" value="TreeGrafter"/>
</dbReference>
<dbReference type="GO" id="GO:0006094">
    <property type="term" value="P:gluconeogenesis"/>
    <property type="evidence" value="ECO:0007669"/>
    <property type="project" value="UniProtKB-UniRule"/>
</dbReference>
<dbReference type="GO" id="GO:0046327">
    <property type="term" value="P:glycerol biosynthetic process from pyruvate"/>
    <property type="evidence" value="ECO:0007669"/>
    <property type="project" value="TreeGrafter"/>
</dbReference>
<dbReference type="GO" id="GO:0006107">
    <property type="term" value="P:oxaloacetate metabolic process"/>
    <property type="evidence" value="ECO:0007669"/>
    <property type="project" value="TreeGrafter"/>
</dbReference>
<dbReference type="GO" id="GO:0019543">
    <property type="term" value="P:propionate catabolic process"/>
    <property type="evidence" value="ECO:0007669"/>
    <property type="project" value="TreeGrafter"/>
</dbReference>
<dbReference type="GO" id="GO:0033993">
    <property type="term" value="P:response to lipid"/>
    <property type="evidence" value="ECO:0007669"/>
    <property type="project" value="TreeGrafter"/>
</dbReference>
<dbReference type="GO" id="GO:0042594">
    <property type="term" value="P:response to starvation"/>
    <property type="evidence" value="ECO:0007669"/>
    <property type="project" value="TreeGrafter"/>
</dbReference>
<dbReference type="CDD" id="cd00819">
    <property type="entry name" value="PEPCK_GTP"/>
    <property type="match status" value="1"/>
</dbReference>
<dbReference type="FunFam" id="3.40.449.10:FF:000005">
    <property type="entry name" value="Phosphoenolpyruvate carboxykinase [GTP]"/>
    <property type="match status" value="1"/>
</dbReference>
<dbReference type="Gene3D" id="3.90.228.20">
    <property type="match status" value="1"/>
</dbReference>
<dbReference type="Gene3D" id="3.40.449.10">
    <property type="entry name" value="Phosphoenolpyruvate Carboxykinase, domain 1"/>
    <property type="match status" value="1"/>
</dbReference>
<dbReference type="Gene3D" id="2.170.8.10">
    <property type="entry name" value="Phosphoenolpyruvate Carboxykinase, domain 2"/>
    <property type="match status" value="1"/>
</dbReference>
<dbReference type="HAMAP" id="MF_00452">
    <property type="entry name" value="PEPCK_GTP"/>
    <property type="match status" value="1"/>
</dbReference>
<dbReference type="InterPro" id="IPR018091">
    <property type="entry name" value="PEP_carboxykin_GTP_CS"/>
</dbReference>
<dbReference type="InterPro" id="IPR013035">
    <property type="entry name" value="PEP_carboxykinase_C"/>
</dbReference>
<dbReference type="InterPro" id="IPR008209">
    <property type="entry name" value="PEP_carboxykinase_GTP"/>
</dbReference>
<dbReference type="InterPro" id="IPR035077">
    <property type="entry name" value="PEP_carboxykinase_GTP_C"/>
</dbReference>
<dbReference type="InterPro" id="IPR035078">
    <property type="entry name" value="PEP_carboxykinase_GTP_N"/>
</dbReference>
<dbReference type="InterPro" id="IPR008210">
    <property type="entry name" value="PEP_carboxykinase_N"/>
</dbReference>
<dbReference type="NCBIfam" id="NF003253">
    <property type="entry name" value="PRK04210.1"/>
    <property type="match status" value="1"/>
</dbReference>
<dbReference type="PANTHER" id="PTHR11561">
    <property type="entry name" value="PHOSPHOENOLPYRUVATE CARBOXYKINASE"/>
    <property type="match status" value="1"/>
</dbReference>
<dbReference type="PANTHER" id="PTHR11561:SF0">
    <property type="entry name" value="PHOSPHOENOLPYRUVATE CARBOXYKINASE [GTP]-RELATED"/>
    <property type="match status" value="1"/>
</dbReference>
<dbReference type="Pfam" id="PF00821">
    <property type="entry name" value="PEPCK_GTP"/>
    <property type="match status" value="1"/>
</dbReference>
<dbReference type="Pfam" id="PF17297">
    <property type="entry name" value="PEPCK_N"/>
    <property type="match status" value="1"/>
</dbReference>
<dbReference type="PIRSF" id="PIRSF001348">
    <property type="entry name" value="PEP_carboxykinase_GTP"/>
    <property type="match status" value="1"/>
</dbReference>
<dbReference type="SUPFAM" id="SSF68923">
    <property type="entry name" value="PEP carboxykinase N-terminal domain"/>
    <property type="match status" value="1"/>
</dbReference>
<dbReference type="SUPFAM" id="SSF53795">
    <property type="entry name" value="PEP carboxykinase-like"/>
    <property type="match status" value="1"/>
</dbReference>
<dbReference type="PROSITE" id="PS00505">
    <property type="entry name" value="PEPCK_GTP"/>
    <property type="match status" value="1"/>
</dbReference>
<evidence type="ECO:0000255" key="1">
    <source>
        <dbReference type="HAMAP-Rule" id="MF_00452"/>
    </source>
</evidence>
<feature type="chain" id="PRO_0000103594" description="Phosphoenolpyruvate carboxykinase [GTP]">
    <location>
        <begin position="1"/>
        <end position="603"/>
    </location>
</feature>
<feature type="active site" evidence="1">
    <location>
        <position position="269"/>
    </location>
</feature>
<feature type="binding site" evidence="1">
    <location>
        <position position="76"/>
    </location>
    <ligand>
        <name>substrate</name>
    </ligand>
</feature>
<feature type="binding site" evidence="1">
    <location>
        <begin position="216"/>
        <end position="218"/>
    </location>
    <ligand>
        <name>substrate</name>
    </ligand>
</feature>
<feature type="binding site" evidence="1">
    <location>
        <position position="225"/>
    </location>
    <ligand>
        <name>Mn(2+)</name>
        <dbReference type="ChEBI" id="CHEBI:29035"/>
    </ligand>
</feature>
<feature type="binding site" evidence="1">
    <location>
        <position position="245"/>
    </location>
    <ligand>
        <name>Mn(2+)</name>
        <dbReference type="ChEBI" id="CHEBI:29035"/>
    </ligand>
</feature>
<feature type="binding site" evidence="1">
    <location>
        <position position="267"/>
    </location>
    <ligand>
        <name>substrate</name>
    </ligand>
</feature>
<feature type="binding site" evidence="1">
    <location>
        <begin position="268"/>
        <end position="273"/>
    </location>
    <ligand>
        <name>GTP</name>
        <dbReference type="ChEBI" id="CHEBI:37565"/>
    </ligand>
</feature>
<feature type="binding site" evidence="1">
    <location>
        <position position="292"/>
    </location>
    <ligand>
        <name>Mn(2+)</name>
        <dbReference type="ChEBI" id="CHEBI:29035"/>
    </ligand>
</feature>
<feature type="binding site" evidence="1">
    <location>
        <begin position="381"/>
        <end position="383"/>
    </location>
    <ligand>
        <name>substrate</name>
    </ligand>
</feature>
<feature type="binding site" evidence="1">
    <location>
        <position position="383"/>
    </location>
    <ligand>
        <name>GTP</name>
        <dbReference type="ChEBI" id="CHEBI:37565"/>
    </ligand>
</feature>
<feature type="binding site" evidence="1">
    <location>
        <position position="414"/>
    </location>
    <ligand>
        <name>GTP</name>
        <dbReference type="ChEBI" id="CHEBI:37565"/>
    </ligand>
</feature>
<feature type="binding site" evidence="1">
    <location>
        <begin position="508"/>
        <end position="511"/>
    </location>
    <ligand>
        <name>GTP</name>
        <dbReference type="ChEBI" id="CHEBI:37565"/>
    </ligand>
</feature>
<keyword id="KW-0963">Cytoplasm</keyword>
<keyword id="KW-0210">Decarboxylase</keyword>
<keyword id="KW-0312">Gluconeogenesis</keyword>
<keyword id="KW-0342">GTP-binding</keyword>
<keyword id="KW-0456">Lyase</keyword>
<keyword id="KW-0464">Manganese</keyword>
<keyword id="KW-0479">Metal-binding</keyword>
<keyword id="KW-0547">Nucleotide-binding</keyword>
<reference key="1">
    <citation type="journal article" date="2005" name="Genome Res.">
        <title>The Chlamydophila abortus genome sequence reveals an array of variable proteins that contribute to interspecies variation.</title>
        <authorList>
            <person name="Thomson N.R."/>
            <person name="Yeats C."/>
            <person name="Bell K."/>
            <person name="Holden M.T.G."/>
            <person name="Bentley S.D."/>
            <person name="Livingstone M."/>
            <person name="Cerdeno-Tarraga A.-M."/>
            <person name="Harris B."/>
            <person name="Doggett J."/>
            <person name="Ormond D."/>
            <person name="Mungall K."/>
            <person name="Clarke K."/>
            <person name="Feltwell T."/>
            <person name="Hance Z."/>
            <person name="Sanders M."/>
            <person name="Quail M.A."/>
            <person name="Price C."/>
            <person name="Barrell B.G."/>
            <person name="Parkhill J."/>
            <person name="Longbottom D."/>
        </authorList>
    </citation>
    <scope>NUCLEOTIDE SEQUENCE [LARGE SCALE GENOMIC DNA]</scope>
    <source>
        <strain>DSM 27085 / S26/3</strain>
    </source>
</reference>
<protein>
    <recommendedName>
        <fullName evidence="1">Phosphoenolpyruvate carboxykinase [GTP]</fullName>
        <shortName evidence="1">PEP carboxykinase</shortName>
        <shortName evidence="1">PEPCK</shortName>
        <ecNumber evidence="1">4.1.1.32</ecNumber>
    </recommendedName>
</protein>